<sequence>MSSGLIGKKVGMTSVFDDEGNNVACTVVEAGPNVVTQVKSEGRDGYSAVQLGFDNVKEKNVTQAMLGHFEKAGCPPKRMLSEFRDFGDDVDLGDVVRVQDLFQEDERIDVVGVSKGKGFQGVVKRHGFSGVGMMTHGQSDRQRHPGSIGASADPSRVFKGVRMAGQTGGERTKIQNLRVVRILADQNAILIHGSVPGPKSEYVELHKK</sequence>
<reference key="1">
    <citation type="journal article" date="2005" name="Proc. Natl. Acad. Sci. U.S.A.">
        <title>The genome of Salinibacter ruber: convergence and gene exchange among hyperhalophilic bacteria and archaea.</title>
        <authorList>
            <person name="Mongodin E.F."/>
            <person name="Nelson K.E."/>
            <person name="Daugherty S."/>
            <person name="DeBoy R.T."/>
            <person name="Wister J."/>
            <person name="Khouri H."/>
            <person name="Weidman J."/>
            <person name="Walsh D.A."/>
            <person name="Papke R.T."/>
            <person name="Sanchez Perez G."/>
            <person name="Sharma A.K."/>
            <person name="Nesbo C.L."/>
            <person name="MacLeod D."/>
            <person name="Bapteste E."/>
            <person name="Doolittle W.F."/>
            <person name="Charlebois R.L."/>
            <person name="Legault B."/>
            <person name="Rodriguez-Valera F."/>
        </authorList>
    </citation>
    <scope>NUCLEOTIDE SEQUENCE [LARGE SCALE GENOMIC DNA]</scope>
    <source>
        <strain>DSM 13855 / CECT 5946 / M31</strain>
    </source>
</reference>
<keyword id="KW-1185">Reference proteome</keyword>
<keyword id="KW-0687">Ribonucleoprotein</keyword>
<keyword id="KW-0689">Ribosomal protein</keyword>
<keyword id="KW-0694">RNA-binding</keyword>
<keyword id="KW-0699">rRNA-binding</keyword>
<proteinExistence type="inferred from homology"/>
<protein>
    <recommendedName>
        <fullName evidence="1">Large ribosomal subunit protein uL3</fullName>
    </recommendedName>
    <alternativeName>
        <fullName evidence="2">50S ribosomal protein L3</fullName>
    </alternativeName>
</protein>
<dbReference type="EMBL" id="CP000159">
    <property type="protein sequence ID" value="ABC45749.1"/>
    <property type="molecule type" value="Genomic_DNA"/>
</dbReference>
<dbReference type="RefSeq" id="WP_011403795.1">
    <property type="nucleotide sequence ID" value="NC_007677.1"/>
</dbReference>
<dbReference type="RefSeq" id="YP_445167.1">
    <property type="nucleotide sequence ID" value="NC_007677.1"/>
</dbReference>
<dbReference type="SMR" id="Q2S3R4"/>
<dbReference type="STRING" id="309807.SRU_1035"/>
<dbReference type="EnsemblBacteria" id="ABC45749">
    <property type="protein sequence ID" value="ABC45749"/>
    <property type="gene ID" value="SRU_1035"/>
</dbReference>
<dbReference type="GeneID" id="83727964"/>
<dbReference type="KEGG" id="sru:SRU_1035"/>
<dbReference type="PATRIC" id="fig|309807.25.peg.1073"/>
<dbReference type="eggNOG" id="COG0087">
    <property type="taxonomic scope" value="Bacteria"/>
</dbReference>
<dbReference type="HOGENOM" id="CLU_044142_4_1_10"/>
<dbReference type="OrthoDB" id="9806135at2"/>
<dbReference type="Proteomes" id="UP000008674">
    <property type="component" value="Chromosome"/>
</dbReference>
<dbReference type="GO" id="GO:0022625">
    <property type="term" value="C:cytosolic large ribosomal subunit"/>
    <property type="evidence" value="ECO:0007669"/>
    <property type="project" value="TreeGrafter"/>
</dbReference>
<dbReference type="GO" id="GO:0019843">
    <property type="term" value="F:rRNA binding"/>
    <property type="evidence" value="ECO:0007669"/>
    <property type="project" value="UniProtKB-UniRule"/>
</dbReference>
<dbReference type="GO" id="GO:0003735">
    <property type="term" value="F:structural constituent of ribosome"/>
    <property type="evidence" value="ECO:0007669"/>
    <property type="project" value="InterPro"/>
</dbReference>
<dbReference type="GO" id="GO:0006412">
    <property type="term" value="P:translation"/>
    <property type="evidence" value="ECO:0007669"/>
    <property type="project" value="UniProtKB-UniRule"/>
</dbReference>
<dbReference type="FunFam" id="2.40.30.10:FF:000004">
    <property type="entry name" value="50S ribosomal protein L3"/>
    <property type="match status" value="1"/>
</dbReference>
<dbReference type="FunFam" id="3.30.160.810:FF:000001">
    <property type="entry name" value="50S ribosomal protein L3"/>
    <property type="match status" value="1"/>
</dbReference>
<dbReference type="Gene3D" id="3.30.160.810">
    <property type="match status" value="1"/>
</dbReference>
<dbReference type="Gene3D" id="2.40.30.10">
    <property type="entry name" value="Translation factors"/>
    <property type="match status" value="1"/>
</dbReference>
<dbReference type="HAMAP" id="MF_01325_B">
    <property type="entry name" value="Ribosomal_uL3_B"/>
    <property type="match status" value="1"/>
</dbReference>
<dbReference type="InterPro" id="IPR000597">
    <property type="entry name" value="Ribosomal_uL3"/>
</dbReference>
<dbReference type="InterPro" id="IPR019927">
    <property type="entry name" value="Ribosomal_uL3_bac/org-type"/>
</dbReference>
<dbReference type="InterPro" id="IPR019926">
    <property type="entry name" value="Ribosomal_uL3_CS"/>
</dbReference>
<dbReference type="InterPro" id="IPR009000">
    <property type="entry name" value="Transl_B-barrel_sf"/>
</dbReference>
<dbReference type="NCBIfam" id="TIGR03625">
    <property type="entry name" value="L3_bact"/>
    <property type="match status" value="1"/>
</dbReference>
<dbReference type="PANTHER" id="PTHR11229">
    <property type="entry name" value="50S RIBOSOMAL PROTEIN L3"/>
    <property type="match status" value="1"/>
</dbReference>
<dbReference type="PANTHER" id="PTHR11229:SF16">
    <property type="entry name" value="LARGE RIBOSOMAL SUBUNIT PROTEIN UL3C"/>
    <property type="match status" value="1"/>
</dbReference>
<dbReference type="Pfam" id="PF00297">
    <property type="entry name" value="Ribosomal_L3"/>
    <property type="match status" value="1"/>
</dbReference>
<dbReference type="SUPFAM" id="SSF50447">
    <property type="entry name" value="Translation proteins"/>
    <property type="match status" value="1"/>
</dbReference>
<dbReference type="PROSITE" id="PS00474">
    <property type="entry name" value="RIBOSOMAL_L3"/>
    <property type="match status" value="1"/>
</dbReference>
<gene>
    <name evidence="1" type="primary">rplC</name>
    <name type="ordered locus">SRU_1035</name>
</gene>
<name>RL3_SALRD</name>
<feature type="chain" id="PRO_0000241406" description="Large ribosomal subunit protein uL3">
    <location>
        <begin position="1"/>
        <end position="208"/>
    </location>
</feature>
<accession>Q2S3R4</accession>
<organism>
    <name type="scientific">Salinibacter ruber (strain DSM 13855 / M31)</name>
    <dbReference type="NCBI Taxonomy" id="309807"/>
    <lineage>
        <taxon>Bacteria</taxon>
        <taxon>Pseudomonadati</taxon>
        <taxon>Rhodothermota</taxon>
        <taxon>Rhodothermia</taxon>
        <taxon>Rhodothermales</taxon>
        <taxon>Salinibacteraceae</taxon>
        <taxon>Salinibacter</taxon>
    </lineage>
</organism>
<evidence type="ECO:0000255" key="1">
    <source>
        <dbReference type="HAMAP-Rule" id="MF_01325"/>
    </source>
</evidence>
<evidence type="ECO:0000305" key="2"/>
<comment type="function">
    <text evidence="1">One of the primary rRNA binding proteins, it binds directly near the 3'-end of the 23S rRNA, where it nucleates assembly of the 50S subunit.</text>
</comment>
<comment type="subunit">
    <text evidence="1">Part of the 50S ribosomal subunit. Forms a cluster with proteins L14 and L19.</text>
</comment>
<comment type="similarity">
    <text evidence="1">Belongs to the universal ribosomal protein uL3 family.</text>
</comment>